<proteinExistence type="evidence at protein level"/>
<sequence length="1233" mass="143726">MYRIGSSIKKSNQIRLATIRTTTNVVIRNYCSETSSTQPPPPEQGQETPKPIIKKKKQSREIFSEFVDDGDVVVDHRKHSQKKAVVDQRTQDFDKMLASLTMKDLKLMRYSDNPETFELFSREHFNINDAFEMNLTTKSLLQKQKEKEQKELPGSLFKTQKVIYDNYSQIKSDHIANELNKFKEEFEKPLVSAYNEVINQSNLLYRTKRAEERLIKKRIEKERKEYKLSGLEKHYRDIVQVRNALDFRGKTILAGSDEEDAWQRILERSEITDPHNLSRLHMMDEYNDLGYQTEITEDYINQLSIVPFDFANPASYSSMVNLIDQLVQVDTYRDPEEIASLLVAEKLRAIKKANDQGTEEGKKLSKLLQSQLILELKADRYLETYECTLPELPTPEEIKKFTIDELKELEIVRMAATRLEQYQEAKNRIHILEDNTKQDKIDNYKFYQQMNAPSVANSRDATNLLTVGEMSLKAGTRPSTEDEIIDLLPHDEEVREEHEDDLVDDEKVVATTNEEEPSQEVEESEPVPDIEDPFAINKDFFDKNGRFLLSDKIEAEEQEQEDLIKDDDVAIENVESLITEESVPIAVEESVTTVVEESVTKPPKFLERFAEKGKLPPIRNSNKDSVRQIAESLFNINFDYQEELDEIDGRMDAIDAFHENQEELPLDEREGELDEDIVRPLPSTLPDLKALSAKIRKNEEESLNMIANKYINQEVNEKTATEVLDQIYEAYKTNNLFDKDIIEHDKNTIREANGDVAIPESMYFEYDTTFSDLVDRDVIFKMPLKDTDLVRVLTHQLTETGLLKQEKVLKHNTDDMPVSKELVESNPDAFPDFVKEIIDQNPNDSTDMPITREYIETYDPLIKEFREKMSITKNKDGSVVEEVIEEELIKDENEEEEDEDEEDEGDNKQRVIERSDEVHDEIYDERRLYINLRPQIKDEGVISVPTSTKKITKPIEKDGIDNNDGWLMGKPFNMLNYRLNNQPNKLPMDNVQSEGERVPGEDEPDILVEELADEEDEEFKDLSPSFDQQPKIFEQTDLYYYLQQGKNQEWFRPEKISDKDITSLERRQTWYPRQHIKTYPFEFISSHNTTDQTIEDSWVNRKAVLKVNISAFNLSKTVQDRLAQLTANRYDPQKKVLTLVANNHKTLPENKYEVKRLFKELLHEASLADPNFVSVRTDNYKAPQPQSFVPSQAAKNQTRFNLYRLQGFPLLNNQQRQHMELYSHIRSHLDSTL</sequence>
<keyword id="KW-0903">Direct protein sequencing</keyword>
<keyword id="KW-1185">Reference proteome</keyword>
<dbReference type="EMBL" id="AAFI02000031">
    <property type="protein sequence ID" value="EAL67702.1"/>
    <property type="molecule type" value="Genomic_DNA"/>
</dbReference>
<dbReference type="RefSeq" id="XP_641679.1">
    <property type="nucleotide sequence ID" value="XM_636587.1"/>
</dbReference>
<dbReference type="FunCoup" id="Q54WN8">
    <property type="interactions" value="371"/>
</dbReference>
<dbReference type="STRING" id="44689.Q54WN8"/>
<dbReference type="PaxDb" id="44689-DDB0304956"/>
<dbReference type="EnsemblProtists" id="EAL67702">
    <property type="protein sequence ID" value="EAL67702"/>
    <property type="gene ID" value="DDB_G0279527"/>
</dbReference>
<dbReference type="GeneID" id="8622087"/>
<dbReference type="KEGG" id="ddi:DDB_G0279527"/>
<dbReference type="dictyBase" id="DDB_G0279527"/>
<dbReference type="VEuPathDB" id="AmoebaDB:DDB_G0279527"/>
<dbReference type="eggNOG" id="ENOG502RE35">
    <property type="taxonomic scope" value="Eukaryota"/>
</dbReference>
<dbReference type="HOGENOM" id="CLU_267503_0_0_1"/>
<dbReference type="InParanoid" id="Q54WN8"/>
<dbReference type="OMA" id="EWFRPEK"/>
<dbReference type="PRO" id="PR:Q54WN8"/>
<dbReference type="Proteomes" id="UP000002195">
    <property type="component" value="Chromosome 3"/>
</dbReference>
<dbReference type="GO" id="GO:0005763">
    <property type="term" value="C:mitochondrial small ribosomal subunit"/>
    <property type="evidence" value="ECO:0000318"/>
    <property type="project" value="GO_Central"/>
</dbReference>
<dbReference type="GO" id="GO:0003735">
    <property type="term" value="F:structural constituent of ribosome"/>
    <property type="evidence" value="ECO:0000318"/>
    <property type="project" value="GO_Central"/>
</dbReference>
<dbReference type="GO" id="GO:0032543">
    <property type="term" value="P:mitochondrial translation"/>
    <property type="evidence" value="ECO:0007669"/>
    <property type="project" value="InterPro"/>
</dbReference>
<dbReference type="InterPro" id="IPR019349">
    <property type="entry name" value="Ribosomal_mS35_mit"/>
</dbReference>
<dbReference type="InterPro" id="IPR039848">
    <property type="entry name" value="Ribosomal_mS35_mt"/>
</dbReference>
<dbReference type="PANTHER" id="PTHR13490">
    <property type="entry name" value="MITOCHONDRIAL 28S RIBOSOMAL PROTEIN S28"/>
    <property type="match status" value="1"/>
</dbReference>
<dbReference type="PANTHER" id="PTHR13490:SF0">
    <property type="entry name" value="SMALL RIBOSOMAL SUBUNIT PROTEIN MS35"/>
    <property type="match status" value="1"/>
</dbReference>
<dbReference type="Pfam" id="PF10213">
    <property type="entry name" value="MRP-S28"/>
    <property type="match status" value="1"/>
</dbReference>
<protein>
    <recommendedName>
        <fullName>Uncharacterized protein DDB_G0279527</fullName>
    </recommendedName>
</protein>
<gene>
    <name type="ORF">DDB_G0279527</name>
</gene>
<feature type="chain" id="PRO_0000388370" description="Uncharacterized protein DDB_G0279527">
    <location>
        <begin position="1"/>
        <end position="1233"/>
    </location>
</feature>
<feature type="region of interest" description="Disordered" evidence="1">
    <location>
        <begin position="32"/>
        <end position="51"/>
    </location>
</feature>
<feature type="region of interest" description="Disordered" evidence="1">
    <location>
        <begin position="510"/>
        <end position="529"/>
    </location>
</feature>
<feature type="region of interest" description="Disordered" evidence="1">
    <location>
        <begin position="882"/>
        <end position="915"/>
    </location>
</feature>
<feature type="compositionally biased region" description="Acidic residues" evidence="1">
    <location>
        <begin position="513"/>
        <end position="529"/>
    </location>
</feature>
<feature type="compositionally biased region" description="Acidic residues" evidence="1">
    <location>
        <begin position="882"/>
        <end position="905"/>
    </location>
</feature>
<feature type="compositionally biased region" description="Basic and acidic residues" evidence="1">
    <location>
        <begin position="906"/>
        <end position="915"/>
    </location>
</feature>
<organism>
    <name type="scientific">Dictyostelium discoideum</name>
    <name type="common">Social amoeba</name>
    <dbReference type="NCBI Taxonomy" id="44689"/>
    <lineage>
        <taxon>Eukaryota</taxon>
        <taxon>Amoebozoa</taxon>
        <taxon>Evosea</taxon>
        <taxon>Eumycetozoa</taxon>
        <taxon>Dictyostelia</taxon>
        <taxon>Dictyosteliales</taxon>
        <taxon>Dictyosteliaceae</taxon>
        <taxon>Dictyostelium</taxon>
    </lineage>
</organism>
<evidence type="ECO:0000256" key="1">
    <source>
        <dbReference type="SAM" id="MobiDB-lite"/>
    </source>
</evidence>
<accession>Q54WN8</accession>
<name>Y7952_DICDI</name>
<reference key="1">
    <citation type="journal article" date="2005" name="Nature">
        <title>The genome of the social amoeba Dictyostelium discoideum.</title>
        <authorList>
            <person name="Eichinger L."/>
            <person name="Pachebat J.A."/>
            <person name="Gloeckner G."/>
            <person name="Rajandream M.A."/>
            <person name="Sucgang R."/>
            <person name="Berriman M."/>
            <person name="Song J."/>
            <person name="Olsen R."/>
            <person name="Szafranski K."/>
            <person name="Xu Q."/>
            <person name="Tunggal B."/>
            <person name="Kummerfeld S."/>
            <person name="Madera M."/>
            <person name="Konfortov B.A."/>
            <person name="Rivero F."/>
            <person name="Bankier A.T."/>
            <person name="Lehmann R."/>
            <person name="Hamlin N."/>
            <person name="Davies R."/>
            <person name="Gaudet P."/>
            <person name="Fey P."/>
            <person name="Pilcher K."/>
            <person name="Chen G."/>
            <person name="Saunders D."/>
            <person name="Sodergren E.J."/>
            <person name="Davis P."/>
            <person name="Kerhornou A."/>
            <person name="Nie X."/>
            <person name="Hall N."/>
            <person name="Anjard C."/>
            <person name="Hemphill L."/>
            <person name="Bason N."/>
            <person name="Farbrother P."/>
            <person name="Desany B."/>
            <person name="Just E."/>
            <person name="Morio T."/>
            <person name="Rost R."/>
            <person name="Churcher C.M."/>
            <person name="Cooper J."/>
            <person name="Haydock S."/>
            <person name="van Driessche N."/>
            <person name="Cronin A."/>
            <person name="Goodhead I."/>
            <person name="Muzny D.M."/>
            <person name="Mourier T."/>
            <person name="Pain A."/>
            <person name="Lu M."/>
            <person name="Harper D."/>
            <person name="Lindsay R."/>
            <person name="Hauser H."/>
            <person name="James K.D."/>
            <person name="Quiles M."/>
            <person name="Madan Babu M."/>
            <person name="Saito T."/>
            <person name="Buchrieser C."/>
            <person name="Wardroper A."/>
            <person name="Felder M."/>
            <person name="Thangavelu M."/>
            <person name="Johnson D."/>
            <person name="Knights A."/>
            <person name="Loulseged H."/>
            <person name="Mungall K.L."/>
            <person name="Oliver K."/>
            <person name="Price C."/>
            <person name="Quail M.A."/>
            <person name="Urushihara H."/>
            <person name="Hernandez J."/>
            <person name="Rabbinowitsch E."/>
            <person name="Steffen D."/>
            <person name="Sanders M."/>
            <person name="Ma J."/>
            <person name="Kohara Y."/>
            <person name="Sharp S."/>
            <person name="Simmonds M.N."/>
            <person name="Spiegler S."/>
            <person name="Tivey A."/>
            <person name="Sugano S."/>
            <person name="White B."/>
            <person name="Walker D."/>
            <person name="Woodward J.R."/>
            <person name="Winckler T."/>
            <person name="Tanaka Y."/>
            <person name="Shaulsky G."/>
            <person name="Schleicher M."/>
            <person name="Weinstock G.M."/>
            <person name="Rosenthal A."/>
            <person name="Cox E.C."/>
            <person name="Chisholm R.L."/>
            <person name="Gibbs R.A."/>
            <person name="Loomis W.F."/>
            <person name="Platzer M."/>
            <person name="Kay R.R."/>
            <person name="Williams J.G."/>
            <person name="Dear P.H."/>
            <person name="Noegel A.A."/>
            <person name="Barrell B.G."/>
            <person name="Kuspa A."/>
        </authorList>
    </citation>
    <scope>NUCLEOTIDE SEQUENCE [LARGE SCALE GENOMIC DNA]</scope>
    <source>
        <strain>AX4</strain>
    </source>
</reference>
<reference key="2">
    <citation type="submission" date="2009-07" db="UniProtKB">
        <authorList>
            <person name="Bienvenut W.V."/>
            <person name="Ura S."/>
            <person name="Insall R.H."/>
        </authorList>
    </citation>
    <scope>PROTEIN SEQUENCE OF 90-103; 123-138; 162-171; 251-264; 269-279; 446-473; 792-807; 1056-1066; 1107-1116 AND 1205-1216</scope>
    <scope>IDENTIFICATION BY MASS SPECTROMETRY</scope>
    <source>
        <strain>AX2</strain>
    </source>
</reference>